<dbReference type="EMBL" id="FO080651">
    <property type="protein sequence ID" value="CCD65494.1"/>
    <property type="molecule type" value="Genomic_DNA"/>
</dbReference>
<dbReference type="EMBL" id="FO080651">
    <property type="protein sequence ID" value="CCD65496.1"/>
    <property type="molecule type" value="Genomic_DNA"/>
</dbReference>
<dbReference type="RefSeq" id="NP_503731.1">
    <molecule id="Q9N4Y9-1"/>
    <property type="nucleotide sequence ID" value="NM_071330.7"/>
</dbReference>
<dbReference type="RefSeq" id="NP_503732.2">
    <property type="nucleotide sequence ID" value="NM_071331.4"/>
</dbReference>
<dbReference type="BioGRID" id="43791">
    <property type="interactions" value="1"/>
</dbReference>
<dbReference type="DIP" id="DIP-24811N"/>
<dbReference type="FunCoup" id="Q9N4Y9">
    <property type="interactions" value="2878"/>
</dbReference>
<dbReference type="IntAct" id="Q9N4Y9">
    <property type="interactions" value="1"/>
</dbReference>
<dbReference type="STRING" id="6239.Y45G12B.2a.1"/>
<dbReference type="PaxDb" id="6239-Y45G12B.2a"/>
<dbReference type="PeptideAtlas" id="Q9N4Y9"/>
<dbReference type="EnsemblMetazoa" id="Y45G12B.2a.1">
    <molecule id="Q9N4Y9-1"/>
    <property type="protein sequence ID" value="Y45G12B.2a.1"/>
    <property type="gene ID" value="WBGene00021563"/>
</dbReference>
<dbReference type="EnsemblMetazoa" id="Y45G12B.2b.1">
    <property type="protein sequence ID" value="Y45G12B.2b.1"/>
    <property type="gene ID" value="WBGene00021563"/>
</dbReference>
<dbReference type="GeneID" id="178734"/>
<dbReference type="KEGG" id="cel:CELE_Y45G12B.2"/>
<dbReference type="UCSC" id="Y45G12B.2a">
    <property type="organism name" value="c. elegans"/>
</dbReference>
<dbReference type="AGR" id="WB:WBGene00021563"/>
<dbReference type="CTD" id="178734"/>
<dbReference type="WormBase" id="Y45G12B.2a">
    <molecule id="Q9N4Y9-1"/>
    <property type="protein sequence ID" value="CE21934"/>
    <property type="gene ID" value="WBGene00021563"/>
</dbReference>
<dbReference type="WormBase" id="Y45G12B.2b">
    <property type="protein sequence ID" value="CE51119"/>
    <property type="gene ID" value="WBGene00021563"/>
</dbReference>
<dbReference type="eggNOG" id="KOG3970">
    <property type="taxonomic scope" value="Eukaryota"/>
</dbReference>
<dbReference type="GeneTree" id="ENSGT00390000009753"/>
<dbReference type="HOGENOM" id="CLU_075387_0_0_1"/>
<dbReference type="InParanoid" id="Q9N4Y9"/>
<dbReference type="OMA" id="CEHCMVA"/>
<dbReference type="OrthoDB" id="1916590at2759"/>
<dbReference type="PhylomeDB" id="Q9N4Y9"/>
<dbReference type="PRO" id="PR:Q9N4Y9"/>
<dbReference type="Proteomes" id="UP000001940">
    <property type="component" value="Chromosome V"/>
</dbReference>
<dbReference type="Bgee" id="WBGene00021563">
    <property type="expression patterns" value="Expressed in pharyngeal muscle cell (C elegans) and 4 other cell types or tissues"/>
</dbReference>
<dbReference type="ExpressionAtlas" id="Q9N4Y9">
    <property type="expression patterns" value="baseline and differential"/>
</dbReference>
<dbReference type="GO" id="GO:0005794">
    <property type="term" value="C:Golgi apparatus"/>
    <property type="evidence" value="ECO:0000318"/>
    <property type="project" value="GO_Central"/>
</dbReference>
<dbReference type="GO" id="GO:0016020">
    <property type="term" value="C:membrane"/>
    <property type="evidence" value="ECO:0007669"/>
    <property type="project" value="UniProtKB-SubCell"/>
</dbReference>
<dbReference type="GO" id="GO:0008270">
    <property type="term" value="F:zinc ion binding"/>
    <property type="evidence" value="ECO:0007669"/>
    <property type="project" value="UniProtKB-KW"/>
</dbReference>
<dbReference type="CDD" id="cd16487">
    <property type="entry name" value="mRING-H2-C3DHC3_ZFPL1"/>
    <property type="match status" value="1"/>
</dbReference>
<dbReference type="Gene3D" id="3.30.40.10">
    <property type="entry name" value="Zinc/RING finger domain, C3HC4 (zinc finger)"/>
    <property type="match status" value="1"/>
</dbReference>
<dbReference type="InterPro" id="IPR039043">
    <property type="entry name" value="ZFPL1"/>
</dbReference>
<dbReference type="InterPro" id="IPR001841">
    <property type="entry name" value="Znf_RING"/>
</dbReference>
<dbReference type="InterPro" id="IPR013083">
    <property type="entry name" value="Znf_RING/FYVE/PHD"/>
</dbReference>
<dbReference type="PANTHER" id="PTHR12981">
    <property type="entry name" value="ZINC FINGER PROTEIN-LIKE 1"/>
    <property type="match status" value="1"/>
</dbReference>
<dbReference type="PANTHER" id="PTHR12981:SF0">
    <property type="entry name" value="ZINC FINGER PROTEIN-LIKE 1"/>
    <property type="match status" value="1"/>
</dbReference>
<dbReference type="SMART" id="SM00184">
    <property type="entry name" value="RING"/>
    <property type="match status" value="1"/>
</dbReference>
<dbReference type="SUPFAM" id="SSF57850">
    <property type="entry name" value="RING/U-box"/>
    <property type="match status" value="1"/>
</dbReference>
<dbReference type="PROSITE" id="PS50089">
    <property type="entry name" value="ZF_RING_2"/>
    <property type="match status" value="1"/>
</dbReference>
<comment type="subcellular location">
    <subcellularLocation>
        <location evidence="4">Membrane</location>
        <topology evidence="4">Single-pass membrane protein</topology>
    </subcellularLocation>
</comment>
<comment type="alternative products">
    <event type="alternative splicing"/>
    <isoform>
        <id>Q9N4Y9-1</id>
        <name>a</name>
        <sequence type="displayed"/>
    </isoform>
    <isoform>
        <id>Q9N4Y9-2</id>
        <name>b</name>
        <sequence type="described" ref="VSP_035880"/>
    </isoform>
</comment>
<comment type="similarity">
    <text evidence="4">Belongs to the ZFPL1 family.</text>
</comment>
<feature type="chain" id="PRO_0000355176" description="Zinc finger protein-like 1 homolog">
    <location>
        <begin position="1"/>
        <end position="309"/>
    </location>
</feature>
<feature type="transmembrane region" description="Helical" evidence="1">
    <location>
        <begin position="254"/>
        <end position="274"/>
    </location>
</feature>
<feature type="zinc finger region" description="B box-type; degenerate">
    <location>
        <begin position="1"/>
        <end position="43"/>
    </location>
</feature>
<feature type="zinc finger region" description="RING-type; atypical" evidence="2">
    <location>
        <begin position="53"/>
        <end position="101"/>
    </location>
</feature>
<feature type="region of interest" description="Disordered" evidence="3">
    <location>
        <begin position="200"/>
        <end position="221"/>
    </location>
</feature>
<feature type="splice variant" id="VSP_035880" description="In isoform b." evidence="4">
    <original>MGLCKCPKRKVTNLFCYEHRVNVCEFCLVDNHPNCVVQSYLTWLTDQDYDPNCSLCKTTLAEGDTIRLNCLH</original>
    <variation>MNTPEGRGD</variation>
    <location>
        <begin position="1"/>
        <end position="72"/>
    </location>
</feature>
<name>ZFPL1_CAEEL</name>
<keyword id="KW-0025">Alternative splicing</keyword>
<keyword id="KW-0472">Membrane</keyword>
<keyword id="KW-0479">Metal-binding</keyword>
<keyword id="KW-1185">Reference proteome</keyword>
<keyword id="KW-0812">Transmembrane</keyword>
<keyword id="KW-1133">Transmembrane helix</keyword>
<keyword id="KW-0862">Zinc</keyword>
<keyword id="KW-0863">Zinc-finger</keyword>
<organism>
    <name type="scientific">Caenorhabditis elegans</name>
    <dbReference type="NCBI Taxonomy" id="6239"/>
    <lineage>
        <taxon>Eukaryota</taxon>
        <taxon>Metazoa</taxon>
        <taxon>Ecdysozoa</taxon>
        <taxon>Nematoda</taxon>
        <taxon>Chromadorea</taxon>
        <taxon>Rhabditida</taxon>
        <taxon>Rhabditina</taxon>
        <taxon>Rhabditomorpha</taxon>
        <taxon>Rhabditoidea</taxon>
        <taxon>Rhabditidae</taxon>
        <taxon>Peloderinae</taxon>
        <taxon>Caenorhabditis</taxon>
    </lineage>
</organism>
<accession>Q9N4Y9</accession>
<accession>Q966C0</accession>
<reference key="1">
    <citation type="journal article" date="1998" name="Science">
        <title>Genome sequence of the nematode C. elegans: a platform for investigating biology.</title>
        <authorList>
            <consortium name="The C. elegans sequencing consortium"/>
        </authorList>
    </citation>
    <scope>NUCLEOTIDE SEQUENCE [LARGE SCALE GENOMIC DNA]</scope>
    <scope>ALTERNATIVE SPLICING</scope>
    <source>
        <strain>Bristol N2</strain>
    </source>
</reference>
<sequence>MGLCKCPKRKVTNLFCYEHRVNVCEFCLVDNHPNCVVQSYLTWLTDQDYDPNCSLCKTTLAEGDTIRLNCLHLLHWKCFDEWAANFPATTAPAGYRCPCCSQEVFPPINEVSPLIEKLREQLKQSNWARAALGLPTLPELNRPVPSPAPPQLKNAPVMHKEVPVHNNRSSTPATHLEMEDTASYSVSNNDVTFARKKNYGAESSSDTRPLLQLRDADNEENKYKRRPTMDWMRGLWRAKHGGSGVPQERASAKKIALFVIFLAVLALITIIMVMKRAGYSGEHSSDPLFDPMANPNIRVAVEDSRLPHV</sequence>
<evidence type="ECO:0000255" key="1"/>
<evidence type="ECO:0000255" key="2">
    <source>
        <dbReference type="PROSITE-ProRule" id="PRU00175"/>
    </source>
</evidence>
<evidence type="ECO:0000256" key="3">
    <source>
        <dbReference type="SAM" id="MobiDB-lite"/>
    </source>
</evidence>
<evidence type="ECO:0000305" key="4"/>
<protein>
    <recommendedName>
        <fullName>Zinc finger protein-like 1 homolog</fullName>
    </recommendedName>
</protein>
<gene>
    <name type="ORF">Y45G12B.2</name>
</gene>
<proteinExistence type="inferred from homology"/>